<feature type="chain" id="PRO_0000322383" description="Chorismate synthase">
    <location>
        <begin position="1"/>
        <end position="366"/>
    </location>
</feature>
<feature type="binding site" evidence="1">
    <location>
        <position position="48"/>
    </location>
    <ligand>
        <name>NADP(+)</name>
        <dbReference type="ChEBI" id="CHEBI:58349"/>
    </ligand>
</feature>
<feature type="binding site" evidence="1">
    <location>
        <begin position="125"/>
        <end position="127"/>
    </location>
    <ligand>
        <name>FMN</name>
        <dbReference type="ChEBI" id="CHEBI:58210"/>
    </ligand>
</feature>
<feature type="binding site" evidence="1">
    <location>
        <begin position="238"/>
        <end position="239"/>
    </location>
    <ligand>
        <name>FMN</name>
        <dbReference type="ChEBI" id="CHEBI:58210"/>
    </ligand>
</feature>
<feature type="binding site" evidence="1">
    <location>
        <position position="278"/>
    </location>
    <ligand>
        <name>FMN</name>
        <dbReference type="ChEBI" id="CHEBI:58210"/>
    </ligand>
</feature>
<feature type="binding site" evidence="1">
    <location>
        <begin position="293"/>
        <end position="297"/>
    </location>
    <ligand>
        <name>FMN</name>
        <dbReference type="ChEBI" id="CHEBI:58210"/>
    </ligand>
</feature>
<feature type="binding site" evidence="1">
    <location>
        <position position="319"/>
    </location>
    <ligand>
        <name>FMN</name>
        <dbReference type="ChEBI" id="CHEBI:58210"/>
    </ligand>
</feature>
<protein>
    <recommendedName>
        <fullName evidence="1">Chorismate synthase</fullName>
        <shortName evidence="1">CS</shortName>
        <ecNumber evidence="1">4.2.3.5</ecNumber>
    </recommendedName>
    <alternativeName>
        <fullName evidence="1">5-enolpyruvylshikimate-3-phosphate phospholyase</fullName>
    </alternativeName>
</protein>
<reference key="1">
    <citation type="submission" date="2006-08" db="EMBL/GenBank/DDBJ databases">
        <title>Complete sequence of Alkalilimnicola ehrilichei MLHE-1.</title>
        <authorList>
            <person name="Copeland A."/>
            <person name="Lucas S."/>
            <person name="Lapidus A."/>
            <person name="Barry K."/>
            <person name="Detter J.C."/>
            <person name="Glavina del Rio T."/>
            <person name="Hammon N."/>
            <person name="Israni S."/>
            <person name="Dalin E."/>
            <person name="Tice H."/>
            <person name="Pitluck S."/>
            <person name="Sims D."/>
            <person name="Brettin T."/>
            <person name="Bruce D."/>
            <person name="Han C."/>
            <person name="Tapia R."/>
            <person name="Gilna P."/>
            <person name="Schmutz J."/>
            <person name="Larimer F."/>
            <person name="Land M."/>
            <person name="Hauser L."/>
            <person name="Kyrpides N."/>
            <person name="Mikhailova N."/>
            <person name="Oremland R.S."/>
            <person name="Hoeft S.E."/>
            <person name="Switzer-Blum J."/>
            <person name="Kulp T."/>
            <person name="King G."/>
            <person name="Tabita R."/>
            <person name="Witte B."/>
            <person name="Santini J.M."/>
            <person name="Basu P."/>
            <person name="Hollibaugh J.T."/>
            <person name="Xie G."/>
            <person name="Stolz J.F."/>
            <person name="Richardson P."/>
        </authorList>
    </citation>
    <scope>NUCLEOTIDE SEQUENCE [LARGE SCALE GENOMIC DNA]</scope>
    <source>
        <strain>ATCC BAA-1101 / DSM 17681 / MLHE-1</strain>
    </source>
</reference>
<accession>Q0A9B2</accession>
<comment type="function">
    <text evidence="1">Catalyzes the anti-1,4-elimination of the C-3 phosphate and the C-6 proR hydrogen from 5-enolpyruvylshikimate-3-phosphate (EPSP) to yield chorismate, which is the branch point compound that serves as the starting substrate for the three terminal pathways of aromatic amino acid biosynthesis. This reaction introduces a second double bond into the aromatic ring system.</text>
</comment>
<comment type="catalytic activity">
    <reaction evidence="1">
        <text>5-O-(1-carboxyvinyl)-3-phosphoshikimate = chorismate + phosphate</text>
        <dbReference type="Rhea" id="RHEA:21020"/>
        <dbReference type="ChEBI" id="CHEBI:29748"/>
        <dbReference type="ChEBI" id="CHEBI:43474"/>
        <dbReference type="ChEBI" id="CHEBI:57701"/>
        <dbReference type="EC" id="4.2.3.5"/>
    </reaction>
</comment>
<comment type="cofactor">
    <cofactor evidence="1">
        <name>FMNH2</name>
        <dbReference type="ChEBI" id="CHEBI:57618"/>
    </cofactor>
    <text evidence="1">Reduced FMN (FMNH(2)).</text>
</comment>
<comment type="pathway">
    <text evidence="1">Metabolic intermediate biosynthesis; chorismate biosynthesis; chorismate from D-erythrose 4-phosphate and phosphoenolpyruvate: step 7/7.</text>
</comment>
<comment type="subunit">
    <text evidence="1">Homotetramer.</text>
</comment>
<comment type="similarity">
    <text evidence="1">Belongs to the chorismate synthase family.</text>
</comment>
<name>AROC_ALKEH</name>
<proteinExistence type="inferred from homology"/>
<gene>
    <name evidence="1" type="primary">aroC</name>
    <name type="ordered locus">Mlg_1226</name>
</gene>
<keyword id="KW-0028">Amino-acid biosynthesis</keyword>
<keyword id="KW-0057">Aromatic amino acid biosynthesis</keyword>
<keyword id="KW-0274">FAD</keyword>
<keyword id="KW-0285">Flavoprotein</keyword>
<keyword id="KW-0288">FMN</keyword>
<keyword id="KW-0456">Lyase</keyword>
<keyword id="KW-0521">NADP</keyword>
<keyword id="KW-1185">Reference proteome</keyword>
<evidence type="ECO:0000255" key="1">
    <source>
        <dbReference type="HAMAP-Rule" id="MF_00300"/>
    </source>
</evidence>
<sequence length="366" mass="39215">MSGNTIGKLFTVTTFGESHGPALGAIVDGCPPGLALSEADLQRDLDRRRPGTSKFTTQRKEPDQVRILSGVFEGRTTGTPIGLLIENTDQRSKDYAEIARRFRPGHADYTYLQKYGIRDYRGGGRSSARETAMRVAAGGIARKYLRERLGVTVQGCLTQLGPIELGIKDWMAVDDNPFFCADPERVPDLESFMQDLRKAGNSIGAAVTVVARGCPPGLGEPVFDRLDADLAHALMSINAVKGVELGAGFASVMQHGSEHRDELTPEGFASNNAGGVLGGLSTGQDVVTRIALKPTSSIVVPGRTIDTEGEPVPVVTKGRHDPCVGIRAVPIAEAMVALTLMDHWLRHRAQCADVQPETPPIPAANR</sequence>
<organism>
    <name type="scientific">Alkalilimnicola ehrlichii (strain ATCC BAA-1101 / DSM 17681 / MLHE-1)</name>
    <dbReference type="NCBI Taxonomy" id="187272"/>
    <lineage>
        <taxon>Bacteria</taxon>
        <taxon>Pseudomonadati</taxon>
        <taxon>Pseudomonadota</taxon>
        <taxon>Gammaproteobacteria</taxon>
        <taxon>Chromatiales</taxon>
        <taxon>Ectothiorhodospiraceae</taxon>
        <taxon>Alkalilimnicola</taxon>
    </lineage>
</organism>
<dbReference type="EC" id="4.2.3.5" evidence="1"/>
<dbReference type="EMBL" id="CP000453">
    <property type="protein sequence ID" value="ABI56575.1"/>
    <property type="molecule type" value="Genomic_DNA"/>
</dbReference>
<dbReference type="RefSeq" id="WP_011628970.1">
    <property type="nucleotide sequence ID" value="NC_008340.1"/>
</dbReference>
<dbReference type="SMR" id="Q0A9B2"/>
<dbReference type="KEGG" id="aeh:Mlg_1226"/>
<dbReference type="eggNOG" id="COG0082">
    <property type="taxonomic scope" value="Bacteria"/>
</dbReference>
<dbReference type="HOGENOM" id="CLU_034547_0_2_6"/>
<dbReference type="OrthoDB" id="9771806at2"/>
<dbReference type="UniPathway" id="UPA00053">
    <property type="reaction ID" value="UER00090"/>
</dbReference>
<dbReference type="Proteomes" id="UP000001962">
    <property type="component" value="Chromosome"/>
</dbReference>
<dbReference type="GO" id="GO:0005829">
    <property type="term" value="C:cytosol"/>
    <property type="evidence" value="ECO:0007669"/>
    <property type="project" value="TreeGrafter"/>
</dbReference>
<dbReference type="GO" id="GO:0004107">
    <property type="term" value="F:chorismate synthase activity"/>
    <property type="evidence" value="ECO:0007669"/>
    <property type="project" value="UniProtKB-UniRule"/>
</dbReference>
<dbReference type="GO" id="GO:0010181">
    <property type="term" value="F:FMN binding"/>
    <property type="evidence" value="ECO:0007669"/>
    <property type="project" value="TreeGrafter"/>
</dbReference>
<dbReference type="GO" id="GO:0008652">
    <property type="term" value="P:amino acid biosynthetic process"/>
    <property type="evidence" value="ECO:0007669"/>
    <property type="project" value="UniProtKB-KW"/>
</dbReference>
<dbReference type="GO" id="GO:0009073">
    <property type="term" value="P:aromatic amino acid family biosynthetic process"/>
    <property type="evidence" value="ECO:0007669"/>
    <property type="project" value="UniProtKB-KW"/>
</dbReference>
<dbReference type="GO" id="GO:0009423">
    <property type="term" value="P:chorismate biosynthetic process"/>
    <property type="evidence" value="ECO:0007669"/>
    <property type="project" value="UniProtKB-UniRule"/>
</dbReference>
<dbReference type="CDD" id="cd07304">
    <property type="entry name" value="Chorismate_synthase"/>
    <property type="match status" value="1"/>
</dbReference>
<dbReference type="FunFam" id="3.60.150.10:FF:000001">
    <property type="entry name" value="Chorismate synthase"/>
    <property type="match status" value="1"/>
</dbReference>
<dbReference type="Gene3D" id="3.60.150.10">
    <property type="entry name" value="Chorismate synthase AroC"/>
    <property type="match status" value="1"/>
</dbReference>
<dbReference type="HAMAP" id="MF_00300">
    <property type="entry name" value="Chorismate_synth"/>
    <property type="match status" value="1"/>
</dbReference>
<dbReference type="InterPro" id="IPR000453">
    <property type="entry name" value="Chorismate_synth"/>
</dbReference>
<dbReference type="InterPro" id="IPR035904">
    <property type="entry name" value="Chorismate_synth_AroC_sf"/>
</dbReference>
<dbReference type="InterPro" id="IPR020541">
    <property type="entry name" value="Chorismate_synthase_CS"/>
</dbReference>
<dbReference type="NCBIfam" id="TIGR00033">
    <property type="entry name" value="aroC"/>
    <property type="match status" value="1"/>
</dbReference>
<dbReference type="NCBIfam" id="NF003793">
    <property type="entry name" value="PRK05382.1"/>
    <property type="match status" value="1"/>
</dbReference>
<dbReference type="PANTHER" id="PTHR21085">
    <property type="entry name" value="CHORISMATE SYNTHASE"/>
    <property type="match status" value="1"/>
</dbReference>
<dbReference type="PANTHER" id="PTHR21085:SF0">
    <property type="entry name" value="CHORISMATE SYNTHASE"/>
    <property type="match status" value="1"/>
</dbReference>
<dbReference type="Pfam" id="PF01264">
    <property type="entry name" value="Chorismate_synt"/>
    <property type="match status" value="1"/>
</dbReference>
<dbReference type="PIRSF" id="PIRSF001456">
    <property type="entry name" value="Chorismate_synth"/>
    <property type="match status" value="1"/>
</dbReference>
<dbReference type="SUPFAM" id="SSF103263">
    <property type="entry name" value="Chorismate synthase, AroC"/>
    <property type="match status" value="1"/>
</dbReference>
<dbReference type="PROSITE" id="PS00787">
    <property type="entry name" value="CHORISMATE_SYNTHASE_1"/>
    <property type="match status" value="1"/>
</dbReference>
<dbReference type="PROSITE" id="PS00789">
    <property type="entry name" value="CHORISMATE_SYNTHASE_3"/>
    <property type="match status" value="1"/>
</dbReference>